<evidence type="ECO:0000250" key="1"/>
<evidence type="ECO:0000255" key="2">
    <source>
        <dbReference type="PROSITE-ProRule" id="PRU00541"/>
    </source>
</evidence>
<evidence type="ECO:0000255" key="3">
    <source>
        <dbReference type="PROSITE-ProRule" id="PRU00542"/>
    </source>
</evidence>
<evidence type="ECO:0000305" key="4"/>
<reference key="1">
    <citation type="journal article" date="2000" name="Nature">
        <title>Genome sequence of the endocellular bacterial symbiont of aphids Buchnera sp. APS.</title>
        <authorList>
            <person name="Shigenobu S."/>
            <person name="Watanabe H."/>
            <person name="Hattori M."/>
            <person name="Sakaki Y."/>
            <person name="Ishikawa H."/>
        </authorList>
    </citation>
    <scope>NUCLEOTIDE SEQUENCE [LARGE SCALE GENOMIC DNA]</scope>
    <source>
        <strain>APS</strain>
    </source>
</reference>
<comment type="function">
    <text evidence="1">Couples transcription and DNA repair by recognizing RNA polymerase (RNAP) stalled at DNA lesions. Mediates ATP-dependent release of RNAP and its truncated transcript from the DNA, and recruitment of nucleotide excision repair machinery to the damaged site (By similarity).</text>
</comment>
<comment type="subcellular location">
    <subcellularLocation>
        <location evidence="4">Cytoplasm</location>
    </subcellularLocation>
</comment>
<comment type="similarity">
    <text evidence="4">In the N-terminal section; belongs to the UvrB family.</text>
</comment>
<comment type="similarity">
    <text evidence="4">In the C-terminal section; belongs to the helicase family. RecG subfamily.</text>
</comment>
<name>MFD_BUCAI</name>
<feature type="chain" id="PRO_0000102164" description="Transcription-repair-coupling factor">
    <location>
        <begin position="1"/>
        <end position="812"/>
    </location>
</feature>
<feature type="domain" description="Helicase ATP-binding" evidence="2">
    <location>
        <begin position="280"/>
        <end position="441"/>
    </location>
</feature>
<feature type="domain" description="Helicase C-terminal" evidence="3">
    <location>
        <begin position="462"/>
        <end position="621"/>
    </location>
</feature>
<feature type="short sequence motif" description="DEEH box">
    <location>
        <begin position="394"/>
        <end position="397"/>
    </location>
</feature>
<feature type="binding site" evidence="2">
    <location>
        <begin position="293"/>
        <end position="300"/>
    </location>
    <ligand>
        <name>ATP</name>
        <dbReference type="ChEBI" id="CHEBI:30616"/>
    </ligand>
</feature>
<dbReference type="EC" id="3.6.4.-"/>
<dbReference type="EMBL" id="BA000003">
    <property type="protein sequence ID" value="BAB13004.1"/>
    <property type="molecule type" value="Genomic_DNA"/>
</dbReference>
<dbReference type="RefSeq" id="NP_240118.1">
    <property type="nucleotide sequence ID" value="NC_002528.1"/>
</dbReference>
<dbReference type="RefSeq" id="WP_010896053.1">
    <property type="nucleotide sequence ID" value="NC_002528.1"/>
</dbReference>
<dbReference type="SMR" id="P57381"/>
<dbReference type="STRING" id="563178.BUAP5A_289"/>
<dbReference type="EnsemblBacteria" id="BAB13004">
    <property type="protein sequence ID" value="BAB13004"/>
    <property type="gene ID" value="BAB13004"/>
</dbReference>
<dbReference type="KEGG" id="buc:BU294"/>
<dbReference type="PATRIC" id="fig|107806.10.peg.304"/>
<dbReference type="eggNOG" id="COG1197">
    <property type="taxonomic scope" value="Bacteria"/>
</dbReference>
<dbReference type="HOGENOM" id="CLU_005122_8_2_6"/>
<dbReference type="Proteomes" id="UP000001806">
    <property type="component" value="Chromosome"/>
</dbReference>
<dbReference type="GO" id="GO:0005737">
    <property type="term" value="C:cytoplasm"/>
    <property type="evidence" value="ECO:0007669"/>
    <property type="project" value="UniProtKB-SubCell"/>
</dbReference>
<dbReference type="GO" id="GO:0005524">
    <property type="term" value="F:ATP binding"/>
    <property type="evidence" value="ECO:0007669"/>
    <property type="project" value="UniProtKB-UniRule"/>
</dbReference>
<dbReference type="GO" id="GO:0003684">
    <property type="term" value="F:damaged DNA binding"/>
    <property type="evidence" value="ECO:0007669"/>
    <property type="project" value="InterPro"/>
</dbReference>
<dbReference type="GO" id="GO:0003678">
    <property type="term" value="F:DNA helicase activity"/>
    <property type="evidence" value="ECO:0007669"/>
    <property type="project" value="TreeGrafter"/>
</dbReference>
<dbReference type="GO" id="GO:0016787">
    <property type="term" value="F:hydrolase activity"/>
    <property type="evidence" value="ECO:0007669"/>
    <property type="project" value="UniProtKB-KW"/>
</dbReference>
<dbReference type="GO" id="GO:0006355">
    <property type="term" value="P:regulation of DNA-templated transcription"/>
    <property type="evidence" value="ECO:0007669"/>
    <property type="project" value="UniProtKB-UniRule"/>
</dbReference>
<dbReference type="GO" id="GO:0000716">
    <property type="term" value="P:transcription-coupled nucleotide-excision repair, DNA damage recognition"/>
    <property type="evidence" value="ECO:0007669"/>
    <property type="project" value="UniProtKB-UniRule"/>
</dbReference>
<dbReference type="CDD" id="cd17991">
    <property type="entry name" value="DEXHc_TRCF"/>
    <property type="match status" value="1"/>
</dbReference>
<dbReference type="FunFam" id="3.40.50.300:FF:000546">
    <property type="entry name" value="Transcription-repair-coupling factor"/>
    <property type="match status" value="1"/>
</dbReference>
<dbReference type="Gene3D" id="2.40.10.170">
    <property type="match status" value="1"/>
</dbReference>
<dbReference type="Gene3D" id="3.40.50.11140">
    <property type="match status" value="1"/>
</dbReference>
<dbReference type="Gene3D" id="3.40.50.300">
    <property type="entry name" value="P-loop containing nucleotide triphosphate hydrolases"/>
    <property type="match status" value="2"/>
</dbReference>
<dbReference type="Gene3D" id="3.90.1150.50">
    <property type="entry name" value="Transcription-repair-coupling factor, D7 domain"/>
    <property type="match status" value="1"/>
</dbReference>
<dbReference type="HAMAP" id="MF_00969">
    <property type="entry name" value="TRCF"/>
    <property type="match status" value="1"/>
</dbReference>
<dbReference type="InterPro" id="IPR003711">
    <property type="entry name" value="CarD-like/TRCF_RID"/>
</dbReference>
<dbReference type="InterPro" id="IPR036101">
    <property type="entry name" value="CarD-like/TRCF_RID_sf"/>
</dbReference>
<dbReference type="InterPro" id="IPR011545">
    <property type="entry name" value="DEAD/DEAH_box_helicase_dom"/>
</dbReference>
<dbReference type="InterPro" id="IPR014001">
    <property type="entry name" value="Helicase_ATP-bd"/>
</dbReference>
<dbReference type="InterPro" id="IPR001650">
    <property type="entry name" value="Helicase_C-like"/>
</dbReference>
<dbReference type="InterPro" id="IPR004576">
    <property type="entry name" value="Mfd"/>
</dbReference>
<dbReference type="InterPro" id="IPR048635">
    <property type="entry name" value="MFD_D3"/>
</dbReference>
<dbReference type="InterPro" id="IPR027417">
    <property type="entry name" value="P-loop_NTPase"/>
</dbReference>
<dbReference type="InterPro" id="IPR047112">
    <property type="entry name" value="RecG/Mfd"/>
</dbReference>
<dbReference type="InterPro" id="IPR037235">
    <property type="entry name" value="TRCF-like_C_D7"/>
</dbReference>
<dbReference type="InterPro" id="IPR005118">
    <property type="entry name" value="TRCF_C"/>
</dbReference>
<dbReference type="NCBIfam" id="TIGR00580">
    <property type="entry name" value="mfd"/>
    <property type="match status" value="1"/>
</dbReference>
<dbReference type="PANTHER" id="PTHR47964">
    <property type="entry name" value="ATP-DEPENDENT DNA HELICASE HOMOLOG RECG, CHLOROPLASTIC"/>
    <property type="match status" value="1"/>
</dbReference>
<dbReference type="PANTHER" id="PTHR47964:SF1">
    <property type="entry name" value="ATP-DEPENDENT DNA HELICASE HOMOLOG RECG, CHLOROPLASTIC"/>
    <property type="match status" value="1"/>
</dbReference>
<dbReference type="Pfam" id="PF02559">
    <property type="entry name" value="CarD_TRCF_RID"/>
    <property type="match status" value="1"/>
</dbReference>
<dbReference type="Pfam" id="PF00270">
    <property type="entry name" value="DEAD"/>
    <property type="match status" value="1"/>
</dbReference>
<dbReference type="Pfam" id="PF00271">
    <property type="entry name" value="Helicase_C"/>
    <property type="match status" value="1"/>
</dbReference>
<dbReference type="Pfam" id="PF21132">
    <property type="entry name" value="MFD_D3"/>
    <property type="match status" value="1"/>
</dbReference>
<dbReference type="Pfam" id="PF03461">
    <property type="entry name" value="TRCF"/>
    <property type="match status" value="1"/>
</dbReference>
<dbReference type="SMART" id="SM01058">
    <property type="entry name" value="CarD_TRCF"/>
    <property type="match status" value="1"/>
</dbReference>
<dbReference type="SMART" id="SM00487">
    <property type="entry name" value="DEXDc"/>
    <property type="match status" value="1"/>
</dbReference>
<dbReference type="SMART" id="SM00490">
    <property type="entry name" value="HELICc"/>
    <property type="match status" value="1"/>
</dbReference>
<dbReference type="SMART" id="SM00982">
    <property type="entry name" value="TRCF"/>
    <property type="match status" value="1"/>
</dbReference>
<dbReference type="SUPFAM" id="SSF141259">
    <property type="entry name" value="CarD-like"/>
    <property type="match status" value="1"/>
</dbReference>
<dbReference type="SUPFAM" id="SSF52540">
    <property type="entry name" value="P-loop containing nucleoside triphosphate hydrolases"/>
    <property type="match status" value="3"/>
</dbReference>
<dbReference type="SUPFAM" id="SSF143517">
    <property type="entry name" value="TRCF domain-like"/>
    <property type="match status" value="1"/>
</dbReference>
<dbReference type="PROSITE" id="PS51192">
    <property type="entry name" value="HELICASE_ATP_BIND_1"/>
    <property type="match status" value="1"/>
</dbReference>
<dbReference type="PROSITE" id="PS51194">
    <property type="entry name" value="HELICASE_CTER"/>
    <property type="match status" value="1"/>
</dbReference>
<gene>
    <name type="primary">mfd</name>
    <name type="ordered locus">BU294</name>
</gene>
<organism>
    <name type="scientific">Buchnera aphidicola subsp. Acyrthosiphon pisum (strain APS)</name>
    <name type="common">Acyrthosiphon pisum symbiotic bacterium</name>
    <dbReference type="NCBI Taxonomy" id="107806"/>
    <lineage>
        <taxon>Bacteria</taxon>
        <taxon>Pseudomonadati</taxon>
        <taxon>Pseudomonadota</taxon>
        <taxon>Gammaproteobacteria</taxon>
        <taxon>Enterobacterales</taxon>
        <taxon>Erwiniaceae</taxon>
        <taxon>Buchnera</taxon>
    </lineage>
</organism>
<sequence length="812" mass="93881">MKITKNKILKNKKIINFKYQKLLDLFYNVNNQKKNNQLLSYLYSFSGKIIFSLTEEKSLKKILRFLMRHKIHPQYIKRIIDIKKEIDYFYMIEEIKNGFIDKKNNILFLCTKDLLPILIDDKYIGNIKKNTNNINKFNLSQLILNHPVMHIEHGIGRYKGLTTIETASIQSEYLVISYAEGDKLYVPVSNLHLVSPYTGTSIENAPLHKLGGDDWNKEKHKISKTVYDHAAQLLHIYAKRESKTGFAFKKNIEKYDLFCNDCSFKTTSDQNEVMKFVLKDMSKPIPMDRLICGDVGFGKTEIAMRASFLAVSNKKQVAILVPTTLLAQQHYKNFKIRFSNWPVNINILSRFQTQKEQDLIFKHTKNGRINIIIGTHKLLFKNIEWCSLGLLIIDEEHRFGVSHKEIIKKIYSNIDILTLTATPIPRTLNMAMTGIKDLSIIAKPPAQRLAIKTFIQEYSPILIRKTILREISRGGQVYYIYNKVQNIMNIAERLSILIPEASIKIGHGQMKNIDLKKVMNEFYNNKFNVLICTTIIESGVDIARANTIIIENSDHFGLSQLHQLRGRIGRSNNQAYALLLVNNFNKITSDAKKRLEAISSVDNFGGGFSLSNQDLEIRGVGEILGKEQSGHIKNIGFSLYMDLLKNAIDLLKNGKIFSVEKSLKKPLEIDLHVSSLLPSSYILDINTRLFFYKKLANAIHEKQIEEIKYELIDQFGKLPDFSKNLILIAKIRLIADKIGIKYIKSNNNIGIIEFNDYGSINTEYLLKMFQKEPKIWKMETSTRIKFILHLKNDYLRLKWIINLLRNLFKKNI</sequence>
<accession>P57381</accession>
<accession>Q9F456</accession>
<protein>
    <recommendedName>
        <fullName>Transcription-repair-coupling factor</fullName>
        <shortName>TRCF</shortName>
        <ecNumber>3.6.4.-</ecNumber>
    </recommendedName>
</protein>
<proteinExistence type="inferred from homology"/>
<keyword id="KW-0067">ATP-binding</keyword>
<keyword id="KW-0963">Cytoplasm</keyword>
<keyword id="KW-0227">DNA damage</keyword>
<keyword id="KW-0234">DNA repair</keyword>
<keyword id="KW-0238">DNA-binding</keyword>
<keyword id="KW-0347">Helicase</keyword>
<keyword id="KW-0378">Hydrolase</keyword>
<keyword id="KW-0547">Nucleotide-binding</keyword>
<keyword id="KW-1185">Reference proteome</keyword>